<comment type="function">
    <text evidence="3 4 7">Part of the ABC transporter complex ModABC involved in the transport of molybdenum into the cell (Probable). Binds tungstate and molybdate (PubMed:25172858, PubMed:31627455). Can also bind chromate, with lower affinity (PubMed:31627455). Plays an essential role in recruitment of molybdate for nitrate reduction (PubMed:25172858).</text>
</comment>
<comment type="subunit">
    <text evidence="1">The complex is composed of two ATP-binding proteins (ModC), two transmembrane proteins (ModB) and a solute-binding protein (ModA).</text>
</comment>
<comment type="subcellular location">
    <subcellularLocation>
        <location evidence="1">Periplasm</location>
    </subcellularLocation>
</comment>
<comment type="disruption phenotype">
    <text evidence="3">Deletion of the gene reduces cellular molybdate concentrations and results in inhibition of anaerobic growth and nitrate reduction.</text>
</comment>
<comment type="similarity">
    <text evidence="6">Belongs to the bacterial solute-binding protein ModA family.</text>
</comment>
<protein>
    <recommendedName>
        <fullName evidence="6">Tungstate/molybdate/chromate-binding protein ModA</fullName>
    </recommendedName>
</protein>
<sequence length="251" mass="26377">MTTRLPQLLLALLASAVSLAASADEVQVAVAANFTAPIQAIAKEFEKDTGHRLVAAYGATGQFYTQIKNGAPFQVFLSADDSTPAKLEQEGEVVPGSRFTYAIGTLALWSPKAGYVDAEGEVLKSGSFRHLSIANPKTAPYGLAATQAMDKLGLAATLGPKLVEGQNISQAYQFVSSGNAELGFVALSQIYKDGKVATGSAWIVPTELHDPIRQDAVILNKGKDNAAAKALVDYLKGAKAAALIKSYGYEL</sequence>
<reference key="1">
    <citation type="journal article" date="2000" name="Nature">
        <title>Complete genome sequence of Pseudomonas aeruginosa PAO1, an opportunistic pathogen.</title>
        <authorList>
            <person name="Stover C.K."/>
            <person name="Pham X.-Q.T."/>
            <person name="Erwin A.L."/>
            <person name="Mizoguchi S.D."/>
            <person name="Warrener P."/>
            <person name="Hickey M.J."/>
            <person name="Brinkman F.S.L."/>
            <person name="Hufnagle W.O."/>
            <person name="Kowalik D.J."/>
            <person name="Lagrou M."/>
            <person name="Garber R.L."/>
            <person name="Goltry L."/>
            <person name="Tolentino E."/>
            <person name="Westbrock-Wadman S."/>
            <person name="Yuan Y."/>
            <person name="Brody L.L."/>
            <person name="Coulter S.N."/>
            <person name="Folger K.R."/>
            <person name="Kas A."/>
            <person name="Larbig K."/>
            <person name="Lim R.M."/>
            <person name="Smith K.A."/>
            <person name="Spencer D.H."/>
            <person name="Wong G.K.-S."/>
            <person name="Wu Z."/>
            <person name="Paulsen I.T."/>
            <person name="Reizer J."/>
            <person name="Saier M.H. Jr."/>
            <person name="Hancock R.E.W."/>
            <person name="Lory S."/>
            <person name="Olson M.V."/>
        </authorList>
    </citation>
    <scope>NUCLEOTIDE SEQUENCE [LARGE SCALE GENOMIC DNA]</scope>
    <source>
        <strain>ATCC 15692 / DSM 22644 / CIP 104116 / JCM 14847 / LMG 12228 / 1C / PRS 101 / PAO1</strain>
    </source>
</reference>
<reference key="2">
    <citation type="journal article" date="2014" name="Appl. Environ. Microbiol.">
        <title>Acquisition and role of molybdate in Pseudomonas aeruginosa.</title>
        <authorList>
            <person name="Pederick V.G."/>
            <person name="Eijkelkamp B.A."/>
            <person name="Ween M.P."/>
            <person name="Begg S.L."/>
            <person name="Paton J.C."/>
            <person name="McDevitt C.A."/>
        </authorList>
    </citation>
    <scope>FUNCTION</scope>
    <scope>DISRUPTION PHENOTYPE</scope>
    <source>
        <strain>ATCC 15692 / DSM 22644 / CIP 104116 / JCM 14847 / LMG 12228 / 1C / PRS 101 / PAO1</strain>
    </source>
</reference>
<reference key="3">
    <citation type="journal article" date="2019" name="Int. J. Mol. Sci.">
        <title>Determination of Ligand Profiles for Pseudomonas aeruginosa Solute Binding Proteins.</title>
        <authorList>
            <person name="Fernandez M."/>
            <person name="Rico-Jimenez M."/>
            <person name="Ortega A."/>
            <person name="Daddaoua A."/>
            <person name="Garcia Garcia A.I."/>
            <person name="Martin-Mora D."/>
            <person name="Torres N.M."/>
            <person name="Tajuelo A."/>
            <person name="Matilla M.A."/>
            <person name="Krell T."/>
        </authorList>
    </citation>
    <scope>FUNCTION AS A BINDING PROTEIN</scope>
    <source>
        <strain>ATCC 15692 / DSM 22644 / CIP 104116 / JCM 14847 / LMG 12228 / 1C / PRS 101 / PAO1</strain>
    </source>
</reference>
<keyword id="KW-0002">3D-structure</keyword>
<keyword id="KW-0479">Metal-binding</keyword>
<keyword id="KW-0500">Molybdenum</keyword>
<keyword id="KW-0574">Periplasm</keyword>
<keyword id="KW-1185">Reference proteome</keyword>
<keyword id="KW-0732">Signal</keyword>
<keyword id="KW-0813">Transport</keyword>
<keyword id="KW-0826">Tungsten</keyword>
<name>MODA_PSEAE</name>
<organism>
    <name type="scientific">Pseudomonas aeruginosa (strain ATCC 15692 / DSM 22644 / CIP 104116 / JCM 14847 / LMG 12228 / 1C / PRS 101 / PAO1)</name>
    <dbReference type="NCBI Taxonomy" id="208964"/>
    <lineage>
        <taxon>Bacteria</taxon>
        <taxon>Pseudomonadati</taxon>
        <taxon>Pseudomonadota</taxon>
        <taxon>Gammaproteobacteria</taxon>
        <taxon>Pseudomonadales</taxon>
        <taxon>Pseudomonadaceae</taxon>
        <taxon>Pseudomonas</taxon>
    </lineage>
</organism>
<accession>Q9I2N2</accession>
<evidence type="ECO:0000250" key="1">
    <source>
        <dbReference type="UniProtKB" id="P37329"/>
    </source>
</evidence>
<evidence type="ECO:0000255" key="2"/>
<evidence type="ECO:0000269" key="3">
    <source>
    </source>
</evidence>
<evidence type="ECO:0000269" key="4">
    <source>
    </source>
</evidence>
<evidence type="ECO:0000303" key="5">
    <source>
    </source>
</evidence>
<evidence type="ECO:0000305" key="6"/>
<evidence type="ECO:0000305" key="7">
    <source>
    </source>
</evidence>
<evidence type="ECO:0000312" key="8">
    <source>
        <dbReference type="EMBL" id="AAG05252.1"/>
    </source>
</evidence>
<evidence type="ECO:0007829" key="9">
    <source>
        <dbReference type="PDB" id="7T4Z"/>
    </source>
</evidence>
<evidence type="ECO:0007829" key="10">
    <source>
        <dbReference type="PDB" id="7T51"/>
    </source>
</evidence>
<dbReference type="EMBL" id="AE004091">
    <property type="protein sequence ID" value="AAG05252.1"/>
    <property type="molecule type" value="Genomic_DNA"/>
</dbReference>
<dbReference type="PIR" id="B83413">
    <property type="entry name" value="B83413"/>
</dbReference>
<dbReference type="RefSeq" id="NP_250554.1">
    <property type="nucleotide sequence ID" value="NC_002516.2"/>
</dbReference>
<dbReference type="RefSeq" id="WP_003113613.1">
    <property type="nucleotide sequence ID" value="NZ_QZGE01000003.1"/>
</dbReference>
<dbReference type="PDB" id="7T4Z">
    <property type="method" value="X-ray"/>
    <property type="resolution" value="1.78 A"/>
    <property type="chains" value="A/B=21-251"/>
</dbReference>
<dbReference type="PDB" id="7T50">
    <property type="method" value="X-ray"/>
    <property type="resolution" value="1.90 A"/>
    <property type="chains" value="A/B=21-251"/>
</dbReference>
<dbReference type="PDB" id="7T51">
    <property type="method" value="X-ray"/>
    <property type="resolution" value="2.50 A"/>
    <property type="chains" value="A/B=21-251"/>
</dbReference>
<dbReference type="PDB" id="7T5A">
    <property type="method" value="X-ray"/>
    <property type="resolution" value="2.16 A"/>
    <property type="chains" value="A/B=21-251"/>
</dbReference>
<dbReference type="PDBsum" id="7T4Z"/>
<dbReference type="PDBsum" id="7T50"/>
<dbReference type="PDBsum" id="7T51"/>
<dbReference type="PDBsum" id="7T5A"/>
<dbReference type="SMR" id="Q9I2N2"/>
<dbReference type="FunCoup" id="Q9I2N2">
    <property type="interactions" value="276"/>
</dbReference>
<dbReference type="STRING" id="208964.PA1863"/>
<dbReference type="PaxDb" id="208964-PA1863"/>
<dbReference type="GeneID" id="877661"/>
<dbReference type="KEGG" id="pae:PA1863"/>
<dbReference type="PATRIC" id="fig|208964.12.peg.1938"/>
<dbReference type="PseudoCAP" id="PA1863"/>
<dbReference type="HOGENOM" id="CLU_065520_1_0_6"/>
<dbReference type="InParanoid" id="Q9I2N2"/>
<dbReference type="OrthoDB" id="9785015at2"/>
<dbReference type="PhylomeDB" id="Q9I2N2"/>
<dbReference type="BioCyc" id="PAER208964:G1FZ6-1902-MONOMER"/>
<dbReference type="PHI-base" id="PHI:5468"/>
<dbReference type="Proteomes" id="UP000002438">
    <property type="component" value="Chromosome"/>
</dbReference>
<dbReference type="GO" id="GO:0042597">
    <property type="term" value="C:periplasmic space"/>
    <property type="evidence" value="ECO:0007669"/>
    <property type="project" value="UniProtKB-SubCell"/>
</dbReference>
<dbReference type="GO" id="GO:0046872">
    <property type="term" value="F:metal ion binding"/>
    <property type="evidence" value="ECO:0007669"/>
    <property type="project" value="UniProtKB-KW"/>
</dbReference>
<dbReference type="GO" id="GO:0030973">
    <property type="term" value="F:molybdate ion binding"/>
    <property type="evidence" value="ECO:0000318"/>
    <property type="project" value="GO_Central"/>
</dbReference>
<dbReference type="GO" id="GO:0015689">
    <property type="term" value="P:molybdate ion transport"/>
    <property type="evidence" value="ECO:0000318"/>
    <property type="project" value="GO_Central"/>
</dbReference>
<dbReference type="CDD" id="cd13539">
    <property type="entry name" value="PBP2_AvModA"/>
    <property type="match status" value="1"/>
</dbReference>
<dbReference type="FunFam" id="3.40.190.10:FF:000035">
    <property type="entry name" value="Molybdate ABC transporter substrate-binding protein"/>
    <property type="match status" value="1"/>
</dbReference>
<dbReference type="Gene3D" id="3.40.190.10">
    <property type="entry name" value="Periplasmic binding protein-like II"/>
    <property type="match status" value="2"/>
</dbReference>
<dbReference type="InterPro" id="IPR044084">
    <property type="entry name" value="AvModA-like_subst-bd"/>
</dbReference>
<dbReference type="InterPro" id="IPR005950">
    <property type="entry name" value="ModA"/>
</dbReference>
<dbReference type="InterPro" id="IPR050682">
    <property type="entry name" value="ModA/WtpA"/>
</dbReference>
<dbReference type="NCBIfam" id="TIGR01256">
    <property type="entry name" value="modA"/>
    <property type="match status" value="1"/>
</dbReference>
<dbReference type="PANTHER" id="PTHR30632">
    <property type="entry name" value="MOLYBDATE-BINDING PERIPLASMIC PROTEIN"/>
    <property type="match status" value="1"/>
</dbReference>
<dbReference type="PANTHER" id="PTHR30632:SF14">
    <property type="entry name" value="TUNGSTATE_MOLYBDATE_CHROMATE-BINDING PROTEIN MODA"/>
    <property type="match status" value="1"/>
</dbReference>
<dbReference type="Pfam" id="PF13531">
    <property type="entry name" value="SBP_bac_11"/>
    <property type="match status" value="1"/>
</dbReference>
<dbReference type="PIRSF" id="PIRSF004846">
    <property type="entry name" value="ModA"/>
    <property type="match status" value="1"/>
</dbReference>
<dbReference type="SUPFAM" id="SSF53850">
    <property type="entry name" value="Periplasmic binding protein-like II"/>
    <property type="match status" value="1"/>
</dbReference>
<gene>
    <name evidence="5" type="primary">modA</name>
    <name evidence="8" type="ordered locus">PA1863</name>
</gene>
<proteinExistence type="evidence at protein level"/>
<feature type="signal peptide" evidence="2">
    <location>
        <begin position="1"/>
        <end position="23"/>
    </location>
</feature>
<feature type="chain" id="PRO_5004327030" description="Tungstate/molybdate/chromate-binding protein ModA" evidence="2">
    <location>
        <begin position="24"/>
        <end position="251"/>
    </location>
</feature>
<feature type="binding site" evidence="1">
    <location>
        <position position="60"/>
    </location>
    <ligand>
        <name>molybdate</name>
        <dbReference type="ChEBI" id="CHEBI:36264"/>
    </ligand>
</feature>
<feature type="binding site" evidence="1">
    <location>
        <position position="168"/>
    </location>
    <ligand>
        <name>molybdate</name>
        <dbReference type="ChEBI" id="CHEBI:36264"/>
    </ligand>
</feature>
<feature type="strand" evidence="9">
    <location>
        <begin position="26"/>
        <end position="31"/>
    </location>
</feature>
<feature type="helix" evidence="9">
    <location>
        <begin position="32"/>
        <end position="34"/>
    </location>
</feature>
<feature type="helix" evidence="9">
    <location>
        <begin position="35"/>
        <end position="49"/>
    </location>
</feature>
<feature type="strand" evidence="9">
    <location>
        <begin position="53"/>
        <end position="58"/>
    </location>
</feature>
<feature type="helix" evidence="9">
    <location>
        <begin position="60"/>
        <end position="69"/>
    </location>
</feature>
<feature type="strand" evidence="9">
    <location>
        <begin position="74"/>
        <end position="77"/>
    </location>
</feature>
<feature type="strand" evidence="9">
    <location>
        <begin position="79"/>
        <end position="81"/>
    </location>
</feature>
<feature type="helix" evidence="9">
    <location>
        <begin position="82"/>
        <end position="89"/>
    </location>
</feature>
<feature type="strand" evidence="9">
    <location>
        <begin position="99"/>
        <end position="104"/>
    </location>
</feature>
<feature type="strand" evidence="9">
    <location>
        <begin position="106"/>
        <end position="112"/>
    </location>
</feature>
<feature type="turn" evidence="9">
    <location>
        <begin position="113"/>
        <end position="115"/>
    </location>
</feature>
<feature type="helix" evidence="9">
    <location>
        <begin position="121"/>
        <end position="125"/>
    </location>
</feature>
<feature type="strand" evidence="9">
    <location>
        <begin position="131"/>
        <end position="134"/>
    </location>
</feature>
<feature type="turn" evidence="9">
    <location>
        <begin position="136"/>
        <end position="138"/>
    </location>
</feature>
<feature type="helix" evidence="9">
    <location>
        <begin position="140"/>
        <end position="151"/>
    </location>
</feature>
<feature type="helix" evidence="9">
    <location>
        <begin position="155"/>
        <end position="158"/>
    </location>
</feature>
<feature type="helix" evidence="9">
    <location>
        <begin position="159"/>
        <end position="161"/>
    </location>
</feature>
<feature type="strand" evidence="9">
    <location>
        <begin position="162"/>
        <end position="167"/>
    </location>
</feature>
<feature type="helix" evidence="9">
    <location>
        <begin position="168"/>
        <end position="177"/>
    </location>
</feature>
<feature type="strand" evidence="9">
    <location>
        <begin position="181"/>
        <end position="186"/>
    </location>
</feature>
<feature type="helix" evidence="9">
    <location>
        <begin position="187"/>
        <end position="190"/>
    </location>
</feature>
<feature type="strand" evidence="10">
    <location>
        <begin position="193"/>
        <end position="196"/>
    </location>
</feature>
<feature type="strand" evidence="9">
    <location>
        <begin position="198"/>
        <end position="203"/>
    </location>
</feature>
<feature type="helix" evidence="9">
    <location>
        <begin position="206"/>
        <end position="208"/>
    </location>
</feature>
<feature type="strand" evidence="9">
    <location>
        <begin position="212"/>
        <end position="219"/>
    </location>
</feature>
<feature type="helix" evidence="9">
    <location>
        <begin position="220"/>
        <end position="222"/>
    </location>
</feature>
<feature type="helix" evidence="9">
    <location>
        <begin position="226"/>
        <end position="234"/>
    </location>
</feature>
<feature type="helix" evidence="9">
    <location>
        <begin position="238"/>
        <end position="246"/>
    </location>
</feature>